<sequence length="595" mass="67273">MHRYRSHTCAALRKTDVGSNVRLSGWVHRVRDHGGILFIDLRDHYGITQIVADPDSPAFKVAETVRGEWVIRVDGEVKARADDAVNTNLPTGEVEIFATEIEVLSPAKELPLPVFGEPDYPEDIRLKYRFLDLRRETLHKNIMSRTKIIAAMRRRMTEIGFNEFSTPILTASSPEGARDFLVPSRIHPGKFYALPQAPQQYKQLLMVAGFDRYFQIAPCFRDEDPRADRLPGEFYQLDLEMSFVTQEEVWETMEPVMRGIFEEFAEGKPVTKVFRRIAYDDAIRTYGSDKPDLRNPIEMQAVTDHFAGSGFKVFANMIANDAKVEVWAIPAKTGGSRAFCDRMNSWAQSEGQPGLGYIFWRKEGDKLEGAGPIAKNIGEERTEAIRKQMGLEDGDACFFVAGLPSKFYKFAGDARTRAGEELNLVDRDRFELAWIIDFPFYEWDEDNKKIDFAHNPFSMPQGGMDALENMDPLEIKAYQYDLVCNGFEIASGSIRNQLPEVMVKAFEKVGLSQQDVEERFGGLYRAFQYGAPPHGGMAAGIDRVIMLLVGAKNLREISLFPMNQQALDLLMGAPSEVSPAQLRDLHVRLAPVQKS</sequence>
<keyword id="KW-0030">Aminoacyl-tRNA synthetase</keyword>
<keyword id="KW-0067">ATP-binding</keyword>
<keyword id="KW-0963">Cytoplasm</keyword>
<keyword id="KW-0436">Ligase</keyword>
<keyword id="KW-0547">Nucleotide-binding</keyword>
<keyword id="KW-0648">Protein biosynthesis</keyword>
<keyword id="KW-1185">Reference proteome</keyword>
<gene>
    <name evidence="1" type="primary">aspS</name>
    <name type="ordered locus">BCAN_A0766</name>
</gene>
<protein>
    <recommendedName>
        <fullName evidence="1">Aspartate--tRNA(Asp/Asn) ligase</fullName>
        <ecNumber evidence="1">6.1.1.23</ecNumber>
    </recommendedName>
    <alternativeName>
        <fullName evidence="1">Aspartyl-tRNA synthetase</fullName>
        <shortName evidence="1">AspRS</shortName>
    </alternativeName>
    <alternativeName>
        <fullName evidence="1">Non-discriminating aspartyl-tRNA synthetase</fullName>
        <shortName evidence="1">ND-AspRS</shortName>
    </alternativeName>
</protein>
<evidence type="ECO:0000255" key="1">
    <source>
        <dbReference type="HAMAP-Rule" id="MF_00044"/>
    </source>
</evidence>
<accession>A9MAD3</accession>
<dbReference type="EC" id="6.1.1.23" evidence="1"/>
<dbReference type="EMBL" id="CP000872">
    <property type="protein sequence ID" value="ABX61836.1"/>
    <property type="molecule type" value="Genomic_DNA"/>
</dbReference>
<dbReference type="RefSeq" id="WP_004683546.1">
    <property type="nucleotide sequence ID" value="NC_010103.1"/>
</dbReference>
<dbReference type="SMR" id="A9MAD3"/>
<dbReference type="GeneID" id="97533935"/>
<dbReference type="KEGG" id="bcs:BCAN_A0766"/>
<dbReference type="HOGENOM" id="CLU_014330_3_2_5"/>
<dbReference type="PhylomeDB" id="A9MAD3"/>
<dbReference type="Proteomes" id="UP000001385">
    <property type="component" value="Chromosome I"/>
</dbReference>
<dbReference type="GO" id="GO:0005737">
    <property type="term" value="C:cytoplasm"/>
    <property type="evidence" value="ECO:0007669"/>
    <property type="project" value="UniProtKB-SubCell"/>
</dbReference>
<dbReference type="GO" id="GO:0004815">
    <property type="term" value="F:aspartate-tRNA ligase activity"/>
    <property type="evidence" value="ECO:0007669"/>
    <property type="project" value="UniProtKB-UniRule"/>
</dbReference>
<dbReference type="GO" id="GO:0050560">
    <property type="term" value="F:aspartate-tRNA(Asn) ligase activity"/>
    <property type="evidence" value="ECO:0007669"/>
    <property type="project" value="UniProtKB-EC"/>
</dbReference>
<dbReference type="GO" id="GO:0005524">
    <property type="term" value="F:ATP binding"/>
    <property type="evidence" value="ECO:0007669"/>
    <property type="project" value="UniProtKB-UniRule"/>
</dbReference>
<dbReference type="GO" id="GO:0003676">
    <property type="term" value="F:nucleic acid binding"/>
    <property type="evidence" value="ECO:0007669"/>
    <property type="project" value="InterPro"/>
</dbReference>
<dbReference type="GO" id="GO:0006422">
    <property type="term" value="P:aspartyl-tRNA aminoacylation"/>
    <property type="evidence" value="ECO:0007669"/>
    <property type="project" value="UniProtKB-UniRule"/>
</dbReference>
<dbReference type="CDD" id="cd00777">
    <property type="entry name" value="AspRS_core"/>
    <property type="match status" value="1"/>
</dbReference>
<dbReference type="CDD" id="cd04317">
    <property type="entry name" value="EcAspRS_like_N"/>
    <property type="match status" value="1"/>
</dbReference>
<dbReference type="Gene3D" id="3.30.930.10">
    <property type="entry name" value="Bira Bifunctional Protein, Domain 2"/>
    <property type="match status" value="1"/>
</dbReference>
<dbReference type="Gene3D" id="3.30.1360.30">
    <property type="entry name" value="GAD-like domain"/>
    <property type="match status" value="1"/>
</dbReference>
<dbReference type="Gene3D" id="2.40.50.140">
    <property type="entry name" value="Nucleic acid-binding proteins"/>
    <property type="match status" value="1"/>
</dbReference>
<dbReference type="HAMAP" id="MF_00044">
    <property type="entry name" value="Asp_tRNA_synth_type1"/>
    <property type="match status" value="1"/>
</dbReference>
<dbReference type="InterPro" id="IPR004364">
    <property type="entry name" value="Aa-tRNA-synt_II"/>
</dbReference>
<dbReference type="InterPro" id="IPR006195">
    <property type="entry name" value="aa-tRNA-synth_II"/>
</dbReference>
<dbReference type="InterPro" id="IPR045864">
    <property type="entry name" value="aa-tRNA-synth_II/BPL/LPL"/>
</dbReference>
<dbReference type="InterPro" id="IPR004524">
    <property type="entry name" value="Asp-tRNA-ligase_1"/>
</dbReference>
<dbReference type="InterPro" id="IPR047089">
    <property type="entry name" value="Asp-tRNA-ligase_1_N"/>
</dbReference>
<dbReference type="InterPro" id="IPR002312">
    <property type="entry name" value="Asp/Asn-tRNA-synth_IIb"/>
</dbReference>
<dbReference type="InterPro" id="IPR047090">
    <property type="entry name" value="AspRS_core"/>
</dbReference>
<dbReference type="InterPro" id="IPR004115">
    <property type="entry name" value="GAD-like_sf"/>
</dbReference>
<dbReference type="InterPro" id="IPR029351">
    <property type="entry name" value="GAD_dom"/>
</dbReference>
<dbReference type="InterPro" id="IPR012340">
    <property type="entry name" value="NA-bd_OB-fold"/>
</dbReference>
<dbReference type="InterPro" id="IPR004365">
    <property type="entry name" value="NA-bd_OB_tRNA"/>
</dbReference>
<dbReference type="NCBIfam" id="TIGR00459">
    <property type="entry name" value="aspS_bact"/>
    <property type="match status" value="1"/>
</dbReference>
<dbReference type="NCBIfam" id="NF001750">
    <property type="entry name" value="PRK00476.1"/>
    <property type="match status" value="1"/>
</dbReference>
<dbReference type="PANTHER" id="PTHR22594:SF5">
    <property type="entry name" value="ASPARTATE--TRNA LIGASE, MITOCHONDRIAL"/>
    <property type="match status" value="1"/>
</dbReference>
<dbReference type="PANTHER" id="PTHR22594">
    <property type="entry name" value="ASPARTYL/LYSYL-TRNA SYNTHETASE"/>
    <property type="match status" value="1"/>
</dbReference>
<dbReference type="Pfam" id="PF02938">
    <property type="entry name" value="GAD"/>
    <property type="match status" value="1"/>
</dbReference>
<dbReference type="Pfam" id="PF00152">
    <property type="entry name" value="tRNA-synt_2"/>
    <property type="match status" value="1"/>
</dbReference>
<dbReference type="Pfam" id="PF01336">
    <property type="entry name" value="tRNA_anti-codon"/>
    <property type="match status" value="1"/>
</dbReference>
<dbReference type="PRINTS" id="PR01042">
    <property type="entry name" value="TRNASYNTHASP"/>
</dbReference>
<dbReference type="SUPFAM" id="SSF55681">
    <property type="entry name" value="Class II aaRS and biotin synthetases"/>
    <property type="match status" value="1"/>
</dbReference>
<dbReference type="SUPFAM" id="SSF55261">
    <property type="entry name" value="GAD domain-like"/>
    <property type="match status" value="1"/>
</dbReference>
<dbReference type="SUPFAM" id="SSF50249">
    <property type="entry name" value="Nucleic acid-binding proteins"/>
    <property type="match status" value="1"/>
</dbReference>
<dbReference type="PROSITE" id="PS50862">
    <property type="entry name" value="AA_TRNA_LIGASE_II"/>
    <property type="match status" value="1"/>
</dbReference>
<proteinExistence type="inferred from homology"/>
<reference key="1">
    <citation type="submission" date="2007-10" db="EMBL/GenBank/DDBJ databases">
        <title>Brucella canis ATCC 23365 whole genome shotgun sequencing project.</title>
        <authorList>
            <person name="Setubal J.C."/>
            <person name="Bowns C."/>
            <person name="Boyle S."/>
            <person name="Crasta O.R."/>
            <person name="Czar M.J."/>
            <person name="Dharmanolla C."/>
            <person name="Gillespie J.J."/>
            <person name="Kenyon R.W."/>
            <person name="Lu J."/>
            <person name="Mane S."/>
            <person name="Mohapatra S."/>
            <person name="Nagrani S."/>
            <person name="Purkayastha A."/>
            <person name="Rajasimha H.K."/>
            <person name="Shallom J.M."/>
            <person name="Shallom S."/>
            <person name="Shukla M."/>
            <person name="Snyder E.E."/>
            <person name="Sobral B.W."/>
            <person name="Wattam A.R."/>
            <person name="Will R."/>
            <person name="Williams K."/>
            <person name="Yoo H."/>
            <person name="Bruce D."/>
            <person name="Detter C."/>
            <person name="Munk C."/>
            <person name="Brettin T.S."/>
        </authorList>
    </citation>
    <scope>NUCLEOTIDE SEQUENCE [LARGE SCALE GENOMIC DNA]</scope>
    <source>
        <strain>ATCC 23365 / NCTC 10854 / RM-666</strain>
    </source>
</reference>
<organism>
    <name type="scientific">Brucella canis (strain ATCC 23365 / NCTC 10854 / RM-666)</name>
    <dbReference type="NCBI Taxonomy" id="483179"/>
    <lineage>
        <taxon>Bacteria</taxon>
        <taxon>Pseudomonadati</taxon>
        <taxon>Pseudomonadota</taxon>
        <taxon>Alphaproteobacteria</taxon>
        <taxon>Hyphomicrobiales</taxon>
        <taxon>Brucellaceae</taxon>
        <taxon>Brucella/Ochrobactrum group</taxon>
        <taxon>Brucella</taxon>
    </lineage>
</organism>
<feature type="chain" id="PRO_1000074692" description="Aspartate--tRNA(Asp/Asn) ligase">
    <location>
        <begin position="1"/>
        <end position="595"/>
    </location>
</feature>
<feature type="region of interest" description="Aspartate" evidence="1">
    <location>
        <begin position="199"/>
        <end position="202"/>
    </location>
</feature>
<feature type="binding site" evidence="1">
    <location>
        <position position="175"/>
    </location>
    <ligand>
        <name>L-aspartate</name>
        <dbReference type="ChEBI" id="CHEBI:29991"/>
    </ligand>
</feature>
<feature type="binding site" evidence="1">
    <location>
        <begin position="221"/>
        <end position="223"/>
    </location>
    <ligand>
        <name>ATP</name>
        <dbReference type="ChEBI" id="CHEBI:30616"/>
    </ligand>
</feature>
<feature type="binding site" evidence="1">
    <location>
        <position position="221"/>
    </location>
    <ligand>
        <name>L-aspartate</name>
        <dbReference type="ChEBI" id="CHEBI:29991"/>
    </ligand>
</feature>
<feature type="binding site" evidence="1">
    <location>
        <position position="454"/>
    </location>
    <ligand>
        <name>L-aspartate</name>
        <dbReference type="ChEBI" id="CHEBI:29991"/>
    </ligand>
</feature>
<feature type="binding site" evidence="1">
    <location>
        <position position="488"/>
    </location>
    <ligand>
        <name>ATP</name>
        <dbReference type="ChEBI" id="CHEBI:30616"/>
    </ligand>
</feature>
<feature type="binding site" evidence="1">
    <location>
        <position position="495"/>
    </location>
    <ligand>
        <name>L-aspartate</name>
        <dbReference type="ChEBI" id="CHEBI:29991"/>
    </ligand>
</feature>
<feature type="binding site" evidence="1">
    <location>
        <begin position="540"/>
        <end position="543"/>
    </location>
    <ligand>
        <name>ATP</name>
        <dbReference type="ChEBI" id="CHEBI:30616"/>
    </ligand>
</feature>
<feature type="site" description="Important for tRNA non-discrimination" evidence="1">
    <location>
        <position position="33"/>
    </location>
</feature>
<comment type="function">
    <text evidence="1">Aspartyl-tRNA synthetase with relaxed tRNA specificity since it is able to aspartylate not only its cognate tRNA(Asp) but also tRNA(Asn). Reaction proceeds in two steps: L-aspartate is first activated by ATP to form Asp-AMP and then transferred to the acceptor end of tRNA(Asp/Asn).</text>
</comment>
<comment type="catalytic activity">
    <reaction evidence="1">
        <text>tRNA(Asx) + L-aspartate + ATP = L-aspartyl-tRNA(Asx) + AMP + diphosphate</text>
        <dbReference type="Rhea" id="RHEA:18349"/>
        <dbReference type="Rhea" id="RHEA-COMP:9710"/>
        <dbReference type="Rhea" id="RHEA-COMP:9711"/>
        <dbReference type="ChEBI" id="CHEBI:29991"/>
        <dbReference type="ChEBI" id="CHEBI:30616"/>
        <dbReference type="ChEBI" id="CHEBI:33019"/>
        <dbReference type="ChEBI" id="CHEBI:78442"/>
        <dbReference type="ChEBI" id="CHEBI:78516"/>
        <dbReference type="ChEBI" id="CHEBI:456215"/>
        <dbReference type="EC" id="6.1.1.23"/>
    </reaction>
</comment>
<comment type="subunit">
    <text evidence="1">Homodimer.</text>
</comment>
<comment type="subcellular location">
    <subcellularLocation>
        <location evidence="1">Cytoplasm</location>
    </subcellularLocation>
</comment>
<comment type="similarity">
    <text evidence="1">Belongs to the class-II aminoacyl-tRNA synthetase family. Type 1 subfamily.</text>
</comment>
<name>SYDND_BRUC2</name>